<organism>
    <name type="scientific">Arabidopsis thaliana</name>
    <name type="common">Mouse-ear cress</name>
    <dbReference type="NCBI Taxonomy" id="3702"/>
    <lineage>
        <taxon>Eukaryota</taxon>
        <taxon>Viridiplantae</taxon>
        <taxon>Streptophyta</taxon>
        <taxon>Embryophyta</taxon>
        <taxon>Tracheophyta</taxon>
        <taxon>Spermatophyta</taxon>
        <taxon>Magnoliopsida</taxon>
        <taxon>eudicotyledons</taxon>
        <taxon>Gunneridae</taxon>
        <taxon>Pentapetalae</taxon>
        <taxon>rosids</taxon>
        <taxon>malvids</taxon>
        <taxon>Brassicales</taxon>
        <taxon>Brassicaceae</taxon>
        <taxon>Camelineae</taxon>
        <taxon>Arabidopsis</taxon>
    </lineage>
</organism>
<reference key="1">
    <citation type="journal article" date="2010" name="Plant Physiol.">
        <title>Proper levels of the Arabidopsis cohesion establishment factor CTF7 are essential for embryo and megagametophyte, but not endosperm, development.</title>
        <authorList>
            <person name="Jiang L."/>
            <person name="Yuan L."/>
            <person name="Xia M."/>
            <person name="Makaroff C.A."/>
        </authorList>
    </citation>
    <scope>NUCLEOTIDE SEQUENCE [MRNA]</scope>
    <scope>FUNCTION</scope>
    <scope>DISRUPTION PHENOTYPE</scope>
    <scope>TISSUE SPECIFICITY</scope>
    <scope>ACETYLATION</scope>
    <scope>SUBCELLULAR LOCATION</scope>
    <source>
        <strain>cv. Columbia</strain>
        <strain>cv. Wassilewskija</strain>
        <tissue>Flower bud</tissue>
    </source>
</reference>
<reference key="2">
    <citation type="journal article" date="1999" name="Nature">
        <title>Sequence and analysis of chromosome 4 of the plant Arabidopsis thaliana.</title>
        <authorList>
            <person name="Mayer K.F.X."/>
            <person name="Schueller C."/>
            <person name="Wambutt R."/>
            <person name="Murphy G."/>
            <person name="Volckaert G."/>
            <person name="Pohl T."/>
            <person name="Duesterhoeft A."/>
            <person name="Stiekema W."/>
            <person name="Entian K.-D."/>
            <person name="Terryn N."/>
            <person name="Harris B."/>
            <person name="Ansorge W."/>
            <person name="Brandt P."/>
            <person name="Grivell L.A."/>
            <person name="Rieger M."/>
            <person name="Weichselgartner M."/>
            <person name="de Simone V."/>
            <person name="Obermaier B."/>
            <person name="Mache R."/>
            <person name="Mueller M."/>
            <person name="Kreis M."/>
            <person name="Delseny M."/>
            <person name="Puigdomenech P."/>
            <person name="Watson M."/>
            <person name="Schmidtheini T."/>
            <person name="Reichert B."/>
            <person name="Portetelle D."/>
            <person name="Perez-Alonso M."/>
            <person name="Boutry M."/>
            <person name="Bancroft I."/>
            <person name="Vos P."/>
            <person name="Hoheisel J."/>
            <person name="Zimmermann W."/>
            <person name="Wedler H."/>
            <person name="Ridley P."/>
            <person name="Langham S.-A."/>
            <person name="McCullagh B."/>
            <person name="Bilham L."/>
            <person name="Robben J."/>
            <person name="van der Schueren J."/>
            <person name="Grymonprez B."/>
            <person name="Chuang Y.-J."/>
            <person name="Vandenbussche F."/>
            <person name="Braeken M."/>
            <person name="Weltjens I."/>
            <person name="Voet M."/>
            <person name="Bastiaens I."/>
            <person name="Aert R."/>
            <person name="Defoor E."/>
            <person name="Weitzenegger T."/>
            <person name="Bothe G."/>
            <person name="Ramsperger U."/>
            <person name="Hilbert H."/>
            <person name="Braun M."/>
            <person name="Holzer E."/>
            <person name="Brandt A."/>
            <person name="Peters S."/>
            <person name="van Staveren M."/>
            <person name="Dirkse W."/>
            <person name="Mooijman P."/>
            <person name="Klein Lankhorst R."/>
            <person name="Rose M."/>
            <person name="Hauf J."/>
            <person name="Koetter P."/>
            <person name="Berneiser S."/>
            <person name="Hempel S."/>
            <person name="Feldpausch M."/>
            <person name="Lamberth S."/>
            <person name="Van den Daele H."/>
            <person name="De Keyser A."/>
            <person name="Buysshaert C."/>
            <person name="Gielen J."/>
            <person name="Villarroel R."/>
            <person name="De Clercq R."/>
            <person name="van Montagu M."/>
            <person name="Rogers J."/>
            <person name="Cronin A."/>
            <person name="Quail M.A."/>
            <person name="Bray-Allen S."/>
            <person name="Clark L."/>
            <person name="Doggett J."/>
            <person name="Hall S."/>
            <person name="Kay M."/>
            <person name="Lennard N."/>
            <person name="McLay K."/>
            <person name="Mayes R."/>
            <person name="Pettett A."/>
            <person name="Rajandream M.A."/>
            <person name="Lyne M."/>
            <person name="Benes V."/>
            <person name="Rechmann S."/>
            <person name="Borkova D."/>
            <person name="Bloecker H."/>
            <person name="Scharfe M."/>
            <person name="Grimm M."/>
            <person name="Loehnert T.-H."/>
            <person name="Dose S."/>
            <person name="de Haan M."/>
            <person name="Maarse A.C."/>
            <person name="Schaefer M."/>
            <person name="Mueller-Auer S."/>
            <person name="Gabel C."/>
            <person name="Fuchs M."/>
            <person name="Fartmann B."/>
            <person name="Granderath K."/>
            <person name="Dauner D."/>
            <person name="Herzl A."/>
            <person name="Neumann S."/>
            <person name="Argiriou A."/>
            <person name="Vitale D."/>
            <person name="Liguori R."/>
            <person name="Piravandi E."/>
            <person name="Massenet O."/>
            <person name="Quigley F."/>
            <person name="Clabauld G."/>
            <person name="Muendlein A."/>
            <person name="Felber R."/>
            <person name="Schnabl S."/>
            <person name="Hiller R."/>
            <person name="Schmidt W."/>
            <person name="Lecharny A."/>
            <person name="Aubourg S."/>
            <person name="Chefdor F."/>
            <person name="Cooke R."/>
            <person name="Berger C."/>
            <person name="Monfort A."/>
            <person name="Casacuberta E."/>
            <person name="Gibbons T."/>
            <person name="Weber N."/>
            <person name="Vandenbol M."/>
            <person name="Bargues M."/>
            <person name="Terol J."/>
            <person name="Torres A."/>
            <person name="Perez-Perez A."/>
            <person name="Purnelle B."/>
            <person name="Bent E."/>
            <person name="Johnson S."/>
            <person name="Tacon D."/>
            <person name="Jesse T."/>
            <person name="Heijnen L."/>
            <person name="Schwarz S."/>
            <person name="Scholler P."/>
            <person name="Heber S."/>
            <person name="Francs P."/>
            <person name="Bielke C."/>
            <person name="Frishman D."/>
            <person name="Haase D."/>
            <person name="Lemcke K."/>
            <person name="Mewes H.-W."/>
            <person name="Stocker S."/>
            <person name="Zaccaria P."/>
            <person name="Bevan M."/>
            <person name="Wilson R.K."/>
            <person name="de la Bastide M."/>
            <person name="Habermann K."/>
            <person name="Parnell L."/>
            <person name="Dedhia N."/>
            <person name="Gnoj L."/>
            <person name="Schutz K."/>
            <person name="Huang E."/>
            <person name="Spiegel L."/>
            <person name="Sekhon M."/>
            <person name="Murray J."/>
            <person name="Sheet P."/>
            <person name="Cordes M."/>
            <person name="Abu-Threideh J."/>
            <person name="Stoneking T."/>
            <person name="Kalicki J."/>
            <person name="Graves T."/>
            <person name="Harmon G."/>
            <person name="Edwards J."/>
            <person name="Latreille P."/>
            <person name="Courtney L."/>
            <person name="Cloud J."/>
            <person name="Abbott A."/>
            <person name="Scott K."/>
            <person name="Johnson D."/>
            <person name="Minx P."/>
            <person name="Bentley D."/>
            <person name="Fulton B."/>
            <person name="Miller N."/>
            <person name="Greco T."/>
            <person name="Kemp K."/>
            <person name="Kramer J."/>
            <person name="Fulton L."/>
            <person name="Mardis E."/>
            <person name="Dante M."/>
            <person name="Pepin K."/>
            <person name="Hillier L.W."/>
            <person name="Nelson J."/>
            <person name="Spieth J."/>
            <person name="Ryan E."/>
            <person name="Andrews S."/>
            <person name="Geisel C."/>
            <person name="Layman D."/>
            <person name="Du H."/>
            <person name="Ali J."/>
            <person name="Berghoff A."/>
            <person name="Jones K."/>
            <person name="Drone K."/>
            <person name="Cotton M."/>
            <person name="Joshu C."/>
            <person name="Antonoiu B."/>
            <person name="Zidanic M."/>
            <person name="Strong C."/>
            <person name="Sun H."/>
            <person name="Lamar B."/>
            <person name="Yordan C."/>
            <person name="Ma P."/>
            <person name="Zhong J."/>
            <person name="Preston R."/>
            <person name="Vil D."/>
            <person name="Shekher M."/>
            <person name="Matero A."/>
            <person name="Shah R."/>
            <person name="Swaby I.K."/>
            <person name="O'Shaughnessy A."/>
            <person name="Rodriguez M."/>
            <person name="Hoffman J."/>
            <person name="Till S."/>
            <person name="Granat S."/>
            <person name="Shohdy N."/>
            <person name="Hasegawa A."/>
            <person name="Hameed A."/>
            <person name="Lodhi M."/>
            <person name="Johnson A."/>
            <person name="Chen E."/>
            <person name="Marra M.A."/>
            <person name="Martienssen R."/>
            <person name="McCombie W.R."/>
        </authorList>
    </citation>
    <scope>NUCLEOTIDE SEQUENCE [LARGE SCALE GENOMIC DNA]</scope>
    <source>
        <strain>cv. Columbia</strain>
    </source>
</reference>
<reference key="3">
    <citation type="journal article" date="2017" name="Plant J.">
        <title>Araport11: a complete reannotation of the Arabidopsis thaliana reference genome.</title>
        <authorList>
            <person name="Cheng C.Y."/>
            <person name="Krishnakumar V."/>
            <person name="Chan A.P."/>
            <person name="Thibaud-Nissen F."/>
            <person name="Schobel S."/>
            <person name="Town C.D."/>
        </authorList>
    </citation>
    <scope>GENOME REANNOTATION</scope>
    <source>
        <strain>cv. Columbia</strain>
    </source>
</reference>
<reference key="4">
    <citation type="journal article" date="2013" name="Plant J.">
        <title>Arabidopsis CHROMOSOME TRANSMISSION FIDELITY 7 (AtCTF7/ECO1) is required for DNA repair, mitosis and meiosis.</title>
        <authorList>
            <person name="Bolanos-Villegas P."/>
            <person name="Yang X."/>
            <person name="Wang H.J."/>
            <person name="Juan C.T."/>
            <person name="Chuang M.H."/>
            <person name="Makaroff C.A."/>
            <person name="Jauh G.Y."/>
        </authorList>
    </citation>
    <scope>FUNCTION</scope>
    <source>
        <strain>cv. Columbia</strain>
    </source>
</reference>
<reference key="5">
    <citation type="journal article" date="2016" name="Plant Cell">
        <title>The Opposing Actions of Arabidopsis CHROMOSOME TRANSMISSION FIDELITY7 and WINGS APART-LIKE1 and 2 Differ in Mitotic and Meiotic Cells.</title>
        <authorList>
            <person name="De K."/>
            <person name="Bolanos-Villegas P."/>
            <person name="Mitra S."/>
            <person name="Yang X."/>
            <person name="Homan G."/>
            <person name="Jauh G.-Y."/>
            <person name="Makaroff C.A."/>
        </authorList>
    </citation>
    <scope>FUNCTION</scope>
    <scope>DISRUPTION PHENOTYPE</scope>
    <source>
        <strain>cv. Columbia</strain>
    </source>
</reference>
<keyword id="KW-0007">Acetylation</keyword>
<keyword id="KW-0012">Acyltransferase</keyword>
<keyword id="KW-0131">Cell cycle</keyword>
<keyword id="KW-0132">Cell division</keyword>
<keyword id="KW-0963">Cytoplasm</keyword>
<keyword id="KW-0469">Meiosis</keyword>
<keyword id="KW-0479">Metal-binding</keyword>
<keyword id="KW-0498">Mitosis</keyword>
<keyword id="KW-0539">Nucleus</keyword>
<keyword id="KW-1185">Reference proteome</keyword>
<keyword id="KW-0808">Transferase</keyword>
<keyword id="KW-0862">Zinc</keyword>
<keyword id="KW-0863">Zinc-finger</keyword>
<name>CTF7_ARATH</name>
<dbReference type="EC" id="2.3.1.-"/>
<dbReference type="EMBL" id="EU077499">
    <property type="protein sequence ID" value="ABU62813.1"/>
    <property type="molecule type" value="mRNA"/>
</dbReference>
<dbReference type="EMBL" id="AL021633">
    <property type="protein sequence ID" value="CAA16543.1"/>
    <property type="status" value="ALT_SEQ"/>
    <property type="molecule type" value="Genomic_DNA"/>
</dbReference>
<dbReference type="EMBL" id="AL161578">
    <property type="protein sequence ID" value="CAB79858.1"/>
    <property type="status" value="ALT_SEQ"/>
    <property type="molecule type" value="Genomic_DNA"/>
</dbReference>
<dbReference type="EMBL" id="CP002687">
    <property type="protein sequence ID" value="AEE85905.1"/>
    <property type="molecule type" value="Genomic_DNA"/>
</dbReference>
<dbReference type="PIR" id="T04507">
    <property type="entry name" value="T04507"/>
</dbReference>
<dbReference type="RefSeq" id="NP_194868.2">
    <property type="nucleotide sequence ID" value="NM_119289.3"/>
</dbReference>
<dbReference type="SMR" id="A7UL74"/>
<dbReference type="STRING" id="3702.A7UL74"/>
<dbReference type="iPTMnet" id="A7UL74"/>
<dbReference type="PaxDb" id="3702-AT4G31400.1"/>
<dbReference type="ProteomicsDB" id="222699"/>
<dbReference type="EnsemblPlants" id="AT4G31400.1">
    <property type="protein sequence ID" value="AT4G31400.1"/>
    <property type="gene ID" value="AT4G31400"/>
</dbReference>
<dbReference type="GeneID" id="829267"/>
<dbReference type="Gramene" id="AT4G31400.1">
    <property type="protein sequence ID" value="AT4G31400.1"/>
    <property type="gene ID" value="AT4G31400"/>
</dbReference>
<dbReference type="KEGG" id="ath:AT4G31400"/>
<dbReference type="Araport" id="AT4G31400"/>
<dbReference type="TAIR" id="AT4G31400">
    <property type="gene designation" value="CTF7"/>
</dbReference>
<dbReference type="eggNOG" id="KOG3014">
    <property type="taxonomic scope" value="Eukaryota"/>
</dbReference>
<dbReference type="HOGENOM" id="CLU_039183_1_0_1"/>
<dbReference type="InParanoid" id="A7UL74"/>
<dbReference type="OMA" id="WHVYEES"/>
<dbReference type="PhylomeDB" id="A7UL74"/>
<dbReference type="PRO" id="PR:A7UL74"/>
<dbReference type="Proteomes" id="UP000006548">
    <property type="component" value="Chromosome 4"/>
</dbReference>
<dbReference type="ExpressionAtlas" id="A7UL74">
    <property type="expression patterns" value="baseline and differential"/>
</dbReference>
<dbReference type="GO" id="GO:0005737">
    <property type="term" value="C:cytoplasm"/>
    <property type="evidence" value="ECO:0007669"/>
    <property type="project" value="UniProtKB-SubCell"/>
</dbReference>
<dbReference type="GO" id="GO:0005634">
    <property type="term" value="C:nucleus"/>
    <property type="evidence" value="ECO:0000314"/>
    <property type="project" value="TAIR"/>
</dbReference>
<dbReference type="GO" id="GO:0016407">
    <property type="term" value="F:acetyltransferase activity"/>
    <property type="evidence" value="ECO:0000314"/>
    <property type="project" value="TAIR"/>
</dbReference>
<dbReference type="GO" id="GO:0008270">
    <property type="term" value="F:zinc ion binding"/>
    <property type="evidence" value="ECO:0007669"/>
    <property type="project" value="UniProtKB-KW"/>
</dbReference>
<dbReference type="GO" id="GO:0048653">
    <property type="term" value="P:anther development"/>
    <property type="evidence" value="ECO:0000315"/>
    <property type="project" value="TAIR"/>
</dbReference>
<dbReference type="GO" id="GO:0051301">
    <property type="term" value="P:cell division"/>
    <property type="evidence" value="ECO:0007669"/>
    <property type="project" value="UniProtKB-KW"/>
</dbReference>
<dbReference type="GO" id="GO:0080186">
    <property type="term" value="P:developmental vegetative growth"/>
    <property type="evidence" value="ECO:0000315"/>
    <property type="project" value="TAIR"/>
</dbReference>
<dbReference type="GO" id="GO:0006281">
    <property type="term" value="P:DNA repair"/>
    <property type="evidence" value="ECO:0000315"/>
    <property type="project" value="UniProtKB"/>
</dbReference>
<dbReference type="GO" id="GO:0000724">
    <property type="term" value="P:double-strand break repair via homologous recombination"/>
    <property type="evidence" value="ECO:0000315"/>
    <property type="project" value="TAIR"/>
</dbReference>
<dbReference type="GO" id="GO:0009793">
    <property type="term" value="P:embryo development ending in seed dormancy"/>
    <property type="evidence" value="ECO:0000315"/>
    <property type="project" value="TAIR"/>
</dbReference>
<dbReference type="GO" id="GO:0009553">
    <property type="term" value="P:embryo sac development"/>
    <property type="evidence" value="ECO:0000315"/>
    <property type="project" value="TAIR"/>
</dbReference>
<dbReference type="GO" id="GO:0034089">
    <property type="term" value="P:establishment of meiotic sister chromatid cohesion"/>
    <property type="evidence" value="ECO:0000315"/>
    <property type="project" value="TAIR"/>
</dbReference>
<dbReference type="GO" id="GO:0060772">
    <property type="term" value="P:leaf phyllotactic patterning"/>
    <property type="evidence" value="ECO:0000315"/>
    <property type="project" value="TAIR"/>
</dbReference>
<dbReference type="GO" id="GO:0045132">
    <property type="term" value="P:meiotic chromosome segregation"/>
    <property type="evidence" value="ECO:0000315"/>
    <property type="project" value="TAIR"/>
</dbReference>
<dbReference type="GO" id="GO:0051177">
    <property type="term" value="P:meiotic sister chromatid cohesion"/>
    <property type="evidence" value="ECO:0000315"/>
    <property type="project" value="UniProtKB"/>
</dbReference>
<dbReference type="GO" id="GO:0007064">
    <property type="term" value="P:mitotic sister chromatid cohesion"/>
    <property type="evidence" value="ECO:0000315"/>
    <property type="project" value="UniProtKB"/>
</dbReference>
<dbReference type="GO" id="GO:0000070">
    <property type="term" value="P:mitotic sister chromatid segregation"/>
    <property type="evidence" value="ECO:0000315"/>
    <property type="project" value="TAIR"/>
</dbReference>
<dbReference type="GO" id="GO:0048609">
    <property type="term" value="P:multicellular organismal reproductive process"/>
    <property type="evidence" value="ECO:0000315"/>
    <property type="project" value="TAIR"/>
</dbReference>
<dbReference type="GO" id="GO:0048364">
    <property type="term" value="P:root development"/>
    <property type="evidence" value="ECO:0000315"/>
    <property type="project" value="TAIR"/>
</dbReference>
<dbReference type="GO" id="GO:0007062">
    <property type="term" value="P:sister chromatid cohesion"/>
    <property type="evidence" value="ECO:0000315"/>
    <property type="project" value="TAIR"/>
</dbReference>
<dbReference type="CDD" id="cd04301">
    <property type="entry name" value="NAT_SF"/>
    <property type="match status" value="1"/>
</dbReference>
<dbReference type="InterPro" id="IPR028005">
    <property type="entry name" value="AcTrfase_ESCO_Znf_dom"/>
</dbReference>
<dbReference type="InterPro" id="IPR016181">
    <property type="entry name" value="Acyl_CoA_acyltransferase"/>
</dbReference>
<dbReference type="InterPro" id="IPR028009">
    <property type="entry name" value="ESCO_Acetyltransf_dom"/>
</dbReference>
<dbReference type="PANTHER" id="PTHR45884">
    <property type="entry name" value="N-ACETYLTRANSFERASE ECO"/>
    <property type="match status" value="1"/>
</dbReference>
<dbReference type="PANTHER" id="PTHR45884:SF2">
    <property type="entry name" value="N-ACETYLTRANSFERASE ECO"/>
    <property type="match status" value="1"/>
</dbReference>
<dbReference type="Pfam" id="PF13880">
    <property type="entry name" value="Acetyltransf_13"/>
    <property type="match status" value="1"/>
</dbReference>
<dbReference type="Pfam" id="PF13878">
    <property type="entry name" value="zf-C2H2_3"/>
    <property type="match status" value="1"/>
</dbReference>
<dbReference type="SUPFAM" id="SSF55729">
    <property type="entry name" value="Acyl-CoA N-acyltransferases (Nat)"/>
    <property type="match status" value="1"/>
</dbReference>
<proteinExistence type="evidence at protein level"/>
<sequence>MQAKINSFFKPSSSSSIAASVTTDTDDGLAVWENNRNAIVNTYQRRSAITERSEVLKGCIEKTLKKGSSSVPKNHKKKRNYTQFHLELGQSDFLLRHCAECGAKYAPGDELDEKNHQSFHKDYMYGLPFKGWQNEKAFTSPLFIKNRIVMVSENDSPAHRNKVQEVVKMMEVELGEDWILHQHCKVYLFISSQRISGCLVAEPIKEAFKLIASPDDERQLQKESSSSPSTSIQFGNIVLQREVSKRCRTSDDRLDNGVIVCEEEAKPAVCGIRAIWVSPSNRRKGIATWLLDTTRESFCNNGCMLEKSQLAFSQPSSIGRSFGSKYFGTCSFLLYKAQLIDTHFS</sequence>
<evidence type="ECO:0000255" key="1"/>
<evidence type="ECO:0000269" key="2">
    <source>
    </source>
</evidence>
<evidence type="ECO:0000269" key="3">
    <source>
    </source>
</evidence>
<evidence type="ECO:0000269" key="4">
    <source>
    </source>
</evidence>
<evidence type="ECO:0000303" key="5">
    <source>
    </source>
</evidence>
<evidence type="ECO:0000303" key="6">
    <source>
    </source>
</evidence>
<evidence type="ECO:0000305" key="7"/>
<evidence type="ECO:0000312" key="8">
    <source>
        <dbReference type="Araport" id="AT4G31400"/>
    </source>
</evidence>
<gene>
    <name evidence="5 6" type="primary">CTF7</name>
    <name evidence="5" type="synonym">ECO1</name>
    <name evidence="8" type="ordered locus">At4g31400</name>
    <name type="ORF">F3L17.7</name>
</gene>
<accession>A7UL74</accession>
<accession>O49589</accession>
<comment type="function">
    <text evidence="2 3 4">Acetyltransferase required for the establishment of sister chromatid cohesion (PubMed:20671110). Involved in preservation of genome integrity and meiosis (PubMed:20671110, PubMed:23750584). Required for DNA repair and for the regulation of chromosome segregation during mitotic cell division (PubMed:20671110, PubMed:23750584). Knock-down mutants are extremely dwarf (PubMed:20671110). Regulator of sister chromatid cohesion in meiosis which negatively regulates cohesin association with chromatin, acting as an antagonist of WAPL1 and WAPL2 (PubMed:26813623).</text>
</comment>
<comment type="subcellular location">
    <subcellularLocation>
        <location evidence="2">Nucleus</location>
    </subcellularLocation>
    <subcellularLocation>
        <location evidence="2">Cytoplasm</location>
    </subcellularLocation>
</comment>
<comment type="tissue specificity">
    <text evidence="2">Expressed in roots, stems, leaves, young seedlings and flower buds. Detected in the embryo, but not in the endosperm.</text>
</comment>
<comment type="PTM">
    <text evidence="2">Autoacetylated.</text>
</comment>
<comment type="disruption phenotype">
    <text evidence="2 4">Embryo lethality, but normal endosperm development (PubMed:20671110). No effect on pollen mitosis but minor alterations in female gametophyte development (PubMed:20671110). Defective microsporangenesis and anthesis (PubMed:20671110). Major defects in vegetative growth and development, as well as complete sterility; these phenotypes are partially restored in plants also missing WAPL1 and WAPL2 (PubMed:26813623).</text>
</comment>
<comment type="similarity">
    <text evidence="7">Belongs to the acetyltransferase family. ECO subfamily.</text>
</comment>
<comment type="sequence caution" evidence="7">
    <conflict type="erroneous gene model prediction">
        <sequence resource="EMBL-CDS" id="CAA16543"/>
    </conflict>
</comment>
<comment type="sequence caution" evidence="7">
    <conflict type="erroneous gene model prediction">
        <sequence resource="EMBL-CDS" id="CAB79858"/>
    </conflict>
</comment>
<protein>
    <recommendedName>
        <fullName evidence="5 6">Protein CHROMOSOME TRANSMISSION FIDELITY 7</fullName>
        <ecNumber>2.3.1.-</ecNumber>
    </recommendedName>
    <alternativeName>
        <fullName evidence="5 6">Cohesion establishment factor CTF7</fullName>
    </alternativeName>
    <alternativeName>
        <fullName evidence="5">Protein ESTABLISHMENT OF COHESION 1</fullName>
    </alternativeName>
</protein>
<feature type="chain" id="PRO_0000423619" description="Protein CHROMOSOME TRANSMISSION FIDELITY 7">
    <location>
        <begin position="1"/>
        <end position="345"/>
    </location>
</feature>
<feature type="zinc finger region" description="CCHH-type" evidence="1">
    <location>
        <begin position="96"/>
        <end position="120"/>
    </location>
</feature>